<protein>
    <recommendedName>
        <fullName>Forkhead box protein G1</fullName>
    </recommendedName>
    <alternativeName>
        <fullName>Brain factor 1</fullName>
        <shortName>BF-1</shortName>
        <shortName>BF1</shortName>
    </alternativeName>
    <alternativeName>
        <fullName>Brain factor 2</fullName>
        <shortName>BF-2</shortName>
        <shortName>BF2</shortName>
        <shortName>hBF-2</shortName>
    </alternativeName>
    <alternativeName>
        <fullName>Forkhead box protein G1A</fullName>
    </alternativeName>
    <alternativeName>
        <fullName>Forkhead box protein G1B</fullName>
    </alternativeName>
    <alternativeName>
        <fullName>Forkhead box protein G1C</fullName>
    </alternativeName>
    <alternativeName>
        <fullName>Forkhead-related protein FKHL1</fullName>
        <shortName>HFK1</shortName>
    </alternativeName>
    <alternativeName>
        <fullName>Forkhead-related protein FKHL2</fullName>
        <shortName>HFK2</shortName>
    </alternativeName>
    <alternativeName>
        <fullName>Forkhead-related protein FKHL3</fullName>
        <shortName>HFK3</shortName>
    </alternativeName>
</protein>
<evidence type="ECO:0000250" key="1">
    <source>
        <dbReference type="UniProtKB" id="Q60987"/>
    </source>
</evidence>
<evidence type="ECO:0000255" key="2">
    <source>
        <dbReference type="PROSITE-ProRule" id="PRU00089"/>
    </source>
</evidence>
<evidence type="ECO:0000256" key="3">
    <source>
        <dbReference type="SAM" id="MobiDB-lite"/>
    </source>
</evidence>
<evidence type="ECO:0000269" key="4">
    <source>
    </source>
</evidence>
<evidence type="ECO:0000269" key="5">
    <source>
    </source>
</evidence>
<evidence type="ECO:0000269" key="6">
    <source>
    </source>
</evidence>
<evidence type="ECO:0000269" key="7">
    <source>
    </source>
</evidence>
<evidence type="ECO:0000269" key="8">
    <source>
    </source>
</evidence>
<evidence type="ECO:0000305" key="9"/>
<evidence type="ECO:0007829" key="10">
    <source>
        <dbReference type="PDB" id="7CBY"/>
    </source>
</evidence>
<comment type="function">
    <text evidence="4">Transcription repression factor which plays an important role in the establishment of the regional subdivision of the developing brain and in the development of the telencephalon.</text>
</comment>
<comment type="subunit">
    <text evidence="1 4">Interacts with KDM5B (PubMed:12657635). Interacts with GRG6/TLE6 (By similarity). Interacts with TLE1; the interaction is inhibited by interaction with TLE6/GRG6 (By similarity).</text>
</comment>
<comment type="interaction">
    <interactant intactId="EBI-715416">
        <id>P55316</id>
    </interactant>
    <interactant intactId="EBI-711424">
        <id>Q04724</id>
        <label>TLE1</label>
    </interactant>
    <organismsDiffer>false</organismsDiffer>
    <experiments>2</experiments>
</comment>
<comment type="subcellular location">
    <subcellularLocation>
        <location evidence="2 6">Nucleus</location>
    </subcellularLocation>
</comment>
<comment type="tissue specificity">
    <text evidence="8">Expression is restricted to the neurons of the developing telencephalon.</text>
</comment>
<comment type="disease" evidence="5 6 7">
    <disease id="DI-02790">
        <name>Rett syndrome congenital variant</name>
        <acronym>RTTCV</acronym>
        <description>A severe neurodevelopmental disorder with features of classic Rett syndrome but earlier onset in the first months of life. Clinical features include progressive microcephaly, hypotonia, irresponsiveness and irritability in the neonatal period, intellectual disability, psychomotor regression and stereotypical movements.</description>
        <dbReference type="MIM" id="613454"/>
    </disease>
    <text>The disease is caused by variants affecting the gene represented in this entry.</text>
</comment>
<comment type="caution">
    <text evidence="9">PubMed:7959731 claims that there are 3 different FOXG1 proteins, FOXG1A, FOXG1B, and FOXG1C. It was latter found that there is only one gene and the differences between these three may be sequencing errors since the protein is coded in a unique exon.</text>
</comment>
<comment type="online information" name="Wikipedia">
    <link uri="https://en.wikipedia.org/wiki/FOXG1"/>
    <text>FOXG1 entry</text>
</comment>
<dbReference type="EMBL" id="X74142">
    <property type="protein sequence ID" value="CAA52239.1"/>
    <property type="molecule type" value="mRNA"/>
</dbReference>
<dbReference type="EMBL" id="X74143">
    <property type="protein sequence ID" value="CAA52240.1"/>
    <property type="molecule type" value="mRNA"/>
</dbReference>
<dbReference type="EMBL" id="X74144">
    <property type="protein sequence ID" value="CAA52241.1"/>
    <property type="molecule type" value="mRNA"/>
</dbReference>
<dbReference type="EMBL" id="X78202">
    <property type="protein sequence ID" value="CAA55038.1"/>
    <property type="molecule type" value="Genomic_DNA"/>
</dbReference>
<dbReference type="EMBL" id="AL049777">
    <property type="status" value="NOT_ANNOTATED_CDS"/>
    <property type="molecule type" value="Genomic_DNA"/>
</dbReference>
<dbReference type="EMBL" id="CH471078">
    <property type="protein sequence ID" value="EAW65978.1"/>
    <property type="molecule type" value="Genomic_DNA"/>
</dbReference>
<dbReference type="EMBL" id="BC050072">
    <property type="protein sequence ID" value="AAH50072.1"/>
    <property type="molecule type" value="mRNA"/>
</dbReference>
<dbReference type="CCDS" id="CCDS9636.1"/>
<dbReference type="PIR" id="B54743">
    <property type="entry name" value="B54743"/>
</dbReference>
<dbReference type="PIR" id="I37451">
    <property type="entry name" value="I37451"/>
</dbReference>
<dbReference type="RefSeq" id="NP_005240.3">
    <property type="nucleotide sequence ID" value="NM_005249.4"/>
</dbReference>
<dbReference type="PDB" id="7CBY">
    <property type="method" value="X-ray"/>
    <property type="resolution" value="1.65 A"/>
    <property type="chains" value="C=178-281"/>
</dbReference>
<dbReference type="PDBsum" id="7CBY"/>
<dbReference type="BMRB" id="P55316"/>
<dbReference type="SMR" id="P55316"/>
<dbReference type="BioGRID" id="108580">
    <property type="interactions" value="84"/>
</dbReference>
<dbReference type="CORUM" id="P55316"/>
<dbReference type="FunCoup" id="P55316">
    <property type="interactions" value="1494"/>
</dbReference>
<dbReference type="IntAct" id="P55316">
    <property type="interactions" value="68"/>
</dbReference>
<dbReference type="MINT" id="P55316"/>
<dbReference type="STRING" id="9606.ENSP00000339004"/>
<dbReference type="GlyGen" id="P55316">
    <property type="glycosylation" value="1 site, 1 O-linked glycan (1 site)"/>
</dbReference>
<dbReference type="iPTMnet" id="P55316"/>
<dbReference type="PhosphoSitePlus" id="P55316"/>
<dbReference type="BioMuta" id="FOXG1"/>
<dbReference type="DMDM" id="152031604"/>
<dbReference type="jPOST" id="P55316"/>
<dbReference type="MassIVE" id="P55316"/>
<dbReference type="PaxDb" id="9606-ENSP00000339004"/>
<dbReference type="PeptideAtlas" id="P55316"/>
<dbReference type="ProteomicsDB" id="56844"/>
<dbReference type="Pumba" id="P55316"/>
<dbReference type="Antibodypedia" id="9316">
    <property type="antibodies" value="292 antibodies from 32 providers"/>
</dbReference>
<dbReference type="DNASU" id="2290"/>
<dbReference type="Ensembl" id="ENST00000313071.7">
    <property type="protein sequence ID" value="ENSP00000339004.3"/>
    <property type="gene ID" value="ENSG00000176165.13"/>
</dbReference>
<dbReference type="Ensembl" id="ENST00000706482.1">
    <property type="protein sequence ID" value="ENSP00000516406.1"/>
    <property type="gene ID" value="ENSG00000176165.13"/>
</dbReference>
<dbReference type="GeneID" id="2290"/>
<dbReference type="KEGG" id="hsa:2290"/>
<dbReference type="MANE-Select" id="ENST00000313071.7">
    <property type="protein sequence ID" value="ENSP00000339004.3"/>
    <property type="RefSeq nucleotide sequence ID" value="NM_005249.5"/>
    <property type="RefSeq protein sequence ID" value="NP_005240.3"/>
</dbReference>
<dbReference type="UCSC" id="uc001wqe.5">
    <property type="organism name" value="human"/>
</dbReference>
<dbReference type="AGR" id="HGNC:3811"/>
<dbReference type="CTD" id="2290"/>
<dbReference type="DisGeNET" id="2290"/>
<dbReference type="GeneCards" id="FOXG1"/>
<dbReference type="GeneReviews" id="FOXG1"/>
<dbReference type="HGNC" id="HGNC:3811">
    <property type="gene designation" value="FOXG1"/>
</dbReference>
<dbReference type="HPA" id="ENSG00000176165">
    <property type="expression patterns" value="Tissue enriched (brain)"/>
</dbReference>
<dbReference type="MalaCards" id="FOXG1"/>
<dbReference type="MIM" id="164874">
    <property type="type" value="gene"/>
</dbReference>
<dbReference type="MIM" id="613454">
    <property type="type" value="phenotype"/>
</dbReference>
<dbReference type="neXtProt" id="NX_P55316"/>
<dbReference type="OpenTargets" id="ENSG00000176165"/>
<dbReference type="Orphanet" id="261144">
    <property type="disease" value="FOXG1 syndrome due to 14q12 microdeletion"/>
</dbReference>
<dbReference type="Orphanet" id="598164">
    <property type="disease" value="FOXG1 syndrome due to intragenic alteration"/>
</dbReference>
<dbReference type="Orphanet" id="442835">
    <property type="disease" value="Non-specific early-onset epileptic encephalopathy"/>
</dbReference>
<dbReference type="PharmGKB" id="PA162388806"/>
<dbReference type="VEuPathDB" id="HostDB:ENSG00000176165"/>
<dbReference type="eggNOG" id="KOG2294">
    <property type="taxonomic scope" value="Eukaryota"/>
</dbReference>
<dbReference type="GeneTree" id="ENSGT00940000160678"/>
<dbReference type="HOGENOM" id="CLU_040357_1_0_1"/>
<dbReference type="InParanoid" id="P55316"/>
<dbReference type="OMA" id="AHPMSYS"/>
<dbReference type="OrthoDB" id="5954824at2759"/>
<dbReference type="PAN-GO" id="P55316">
    <property type="GO annotations" value="3 GO annotations based on evolutionary models"/>
</dbReference>
<dbReference type="PhylomeDB" id="P55316"/>
<dbReference type="TreeFam" id="TF316127"/>
<dbReference type="PathwayCommons" id="P55316"/>
<dbReference type="Reactome" id="R-HSA-9022692">
    <property type="pathway name" value="Regulation of MECP2 expression and activity"/>
</dbReference>
<dbReference type="Reactome" id="R-HSA-9617828">
    <property type="pathway name" value="FOXO-mediated transcription of cell cycle genes"/>
</dbReference>
<dbReference type="SignaLink" id="P55316"/>
<dbReference type="SIGNOR" id="P55316"/>
<dbReference type="BioGRID-ORCS" id="2290">
    <property type="hits" value="15 hits in 1177 CRISPR screens"/>
</dbReference>
<dbReference type="ChiTaRS" id="FOXG1">
    <property type="organism name" value="human"/>
</dbReference>
<dbReference type="GeneWiki" id="FOXG1"/>
<dbReference type="GenomeRNAi" id="2290"/>
<dbReference type="Pharos" id="P55316">
    <property type="development level" value="Tbio"/>
</dbReference>
<dbReference type="PRO" id="PR:P55316"/>
<dbReference type="Proteomes" id="UP000005640">
    <property type="component" value="Chromosome 14"/>
</dbReference>
<dbReference type="RNAct" id="P55316">
    <property type="molecule type" value="protein"/>
</dbReference>
<dbReference type="Bgee" id="ENSG00000176165">
    <property type="expression patterns" value="Expressed in cortical plate and 73 other cell types or tissues"/>
</dbReference>
<dbReference type="GO" id="GO:0000785">
    <property type="term" value="C:chromatin"/>
    <property type="evidence" value="ECO:0000247"/>
    <property type="project" value="NTNU_SB"/>
</dbReference>
<dbReference type="GO" id="GO:0005654">
    <property type="term" value="C:nucleoplasm"/>
    <property type="evidence" value="ECO:0000304"/>
    <property type="project" value="Reactome"/>
</dbReference>
<dbReference type="GO" id="GO:0005634">
    <property type="term" value="C:nucleus"/>
    <property type="evidence" value="ECO:0000318"/>
    <property type="project" value="GO_Central"/>
</dbReference>
<dbReference type="GO" id="GO:0003677">
    <property type="term" value="F:DNA binding"/>
    <property type="evidence" value="ECO:0000304"/>
    <property type="project" value="ProtInc"/>
</dbReference>
<dbReference type="GO" id="GO:0000981">
    <property type="term" value="F:DNA-binding transcription factor activity, RNA polymerase II-specific"/>
    <property type="evidence" value="ECO:0000247"/>
    <property type="project" value="NTNU_SB"/>
</dbReference>
<dbReference type="GO" id="GO:1990837">
    <property type="term" value="F:sequence-specific double-stranded DNA binding"/>
    <property type="evidence" value="ECO:0000314"/>
    <property type="project" value="ARUK-UCL"/>
</dbReference>
<dbReference type="GO" id="GO:0016199">
    <property type="term" value="P:axon midline choice point recognition"/>
    <property type="evidence" value="ECO:0007669"/>
    <property type="project" value="Ensembl"/>
</dbReference>
<dbReference type="GO" id="GO:0007420">
    <property type="term" value="P:brain development"/>
    <property type="evidence" value="ECO:0000304"/>
    <property type="project" value="ProtInc"/>
</dbReference>
<dbReference type="GO" id="GO:0009953">
    <property type="term" value="P:dorsal/ventral pattern formation"/>
    <property type="evidence" value="ECO:0007669"/>
    <property type="project" value="Ensembl"/>
</dbReference>
<dbReference type="GO" id="GO:0042472">
    <property type="term" value="P:inner ear morphogenesis"/>
    <property type="evidence" value="ECO:0007669"/>
    <property type="project" value="Ensembl"/>
</dbReference>
<dbReference type="GO" id="GO:0045892">
    <property type="term" value="P:negative regulation of DNA-templated transcription"/>
    <property type="evidence" value="ECO:0000314"/>
    <property type="project" value="UniProtKB"/>
</dbReference>
<dbReference type="GO" id="GO:0045665">
    <property type="term" value="P:negative regulation of neuron differentiation"/>
    <property type="evidence" value="ECO:0007669"/>
    <property type="project" value="Ensembl"/>
</dbReference>
<dbReference type="GO" id="GO:0000122">
    <property type="term" value="P:negative regulation of transcription by RNA polymerase II"/>
    <property type="evidence" value="ECO:0007669"/>
    <property type="project" value="Ensembl"/>
</dbReference>
<dbReference type="GO" id="GO:0007405">
    <property type="term" value="P:neuroblast proliferation"/>
    <property type="evidence" value="ECO:0007669"/>
    <property type="project" value="Ensembl"/>
</dbReference>
<dbReference type="GO" id="GO:0048664">
    <property type="term" value="P:neuron fate determination"/>
    <property type="evidence" value="ECO:0007669"/>
    <property type="project" value="Ensembl"/>
</dbReference>
<dbReference type="GO" id="GO:0045787">
    <property type="term" value="P:positive regulation of cell cycle"/>
    <property type="evidence" value="ECO:0007669"/>
    <property type="project" value="Ensembl"/>
</dbReference>
<dbReference type="GO" id="GO:0002052">
    <property type="term" value="P:positive regulation of neuroblast proliferation"/>
    <property type="evidence" value="ECO:0007669"/>
    <property type="project" value="Ensembl"/>
</dbReference>
<dbReference type="GO" id="GO:0045666">
    <property type="term" value="P:positive regulation of neuron differentiation"/>
    <property type="evidence" value="ECO:0007669"/>
    <property type="project" value="Ensembl"/>
</dbReference>
<dbReference type="GO" id="GO:0021852">
    <property type="term" value="P:pyramidal neuron migration to cerebral cortex"/>
    <property type="evidence" value="ECO:0007669"/>
    <property type="project" value="Ensembl"/>
</dbReference>
<dbReference type="GO" id="GO:0007346">
    <property type="term" value="P:regulation of mitotic cell cycle"/>
    <property type="evidence" value="ECO:0007669"/>
    <property type="project" value="Ensembl"/>
</dbReference>
<dbReference type="GO" id="GO:0006357">
    <property type="term" value="P:regulation of transcription by RNA polymerase II"/>
    <property type="evidence" value="ECO:0000318"/>
    <property type="project" value="GO_Central"/>
</dbReference>
<dbReference type="CDD" id="cd20021">
    <property type="entry name" value="FH_FOXG"/>
    <property type="match status" value="1"/>
</dbReference>
<dbReference type="FunFam" id="1.10.10.10:FF:000135">
    <property type="entry name" value="forkhead box protein G1"/>
    <property type="match status" value="1"/>
</dbReference>
<dbReference type="Gene3D" id="1.10.10.10">
    <property type="entry name" value="Winged helix-like DNA-binding domain superfamily/Winged helix DNA-binding domain"/>
    <property type="match status" value="1"/>
</dbReference>
<dbReference type="InterPro" id="IPR001766">
    <property type="entry name" value="Fork_head_dom"/>
</dbReference>
<dbReference type="InterPro" id="IPR047208">
    <property type="entry name" value="FOXG1"/>
</dbReference>
<dbReference type="InterPro" id="IPR018122">
    <property type="entry name" value="TF_fork_head_CS_1"/>
</dbReference>
<dbReference type="InterPro" id="IPR030456">
    <property type="entry name" value="TF_fork_head_CS_2"/>
</dbReference>
<dbReference type="InterPro" id="IPR036388">
    <property type="entry name" value="WH-like_DNA-bd_sf"/>
</dbReference>
<dbReference type="InterPro" id="IPR036390">
    <property type="entry name" value="WH_DNA-bd_sf"/>
</dbReference>
<dbReference type="PANTHER" id="PTHR46617">
    <property type="entry name" value="FORKHEAD BOX PROTEIN G1"/>
    <property type="match status" value="1"/>
</dbReference>
<dbReference type="PANTHER" id="PTHR46617:SF3">
    <property type="entry name" value="FORKHEAD BOX PROTEIN G1"/>
    <property type="match status" value="1"/>
</dbReference>
<dbReference type="Pfam" id="PF00250">
    <property type="entry name" value="Forkhead"/>
    <property type="match status" value="1"/>
</dbReference>
<dbReference type="PRINTS" id="PR00053">
    <property type="entry name" value="FORKHEAD"/>
</dbReference>
<dbReference type="SMART" id="SM00339">
    <property type="entry name" value="FH"/>
    <property type="match status" value="1"/>
</dbReference>
<dbReference type="SUPFAM" id="SSF81995">
    <property type="entry name" value="beta-sandwich domain of Sec23/24"/>
    <property type="match status" value="1"/>
</dbReference>
<dbReference type="SUPFAM" id="SSF46785">
    <property type="entry name" value="Winged helix' DNA-binding domain"/>
    <property type="match status" value="1"/>
</dbReference>
<dbReference type="PROSITE" id="PS00657">
    <property type="entry name" value="FORK_HEAD_1"/>
    <property type="match status" value="1"/>
</dbReference>
<dbReference type="PROSITE" id="PS00658">
    <property type="entry name" value="FORK_HEAD_2"/>
    <property type="match status" value="1"/>
</dbReference>
<dbReference type="PROSITE" id="PS50039">
    <property type="entry name" value="FORK_HEAD_3"/>
    <property type="match status" value="1"/>
</dbReference>
<keyword id="KW-0002">3D-structure</keyword>
<keyword id="KW-0217">Developmental protein</keyword>
<keyword id="KW-0225">Disease variant</keyword>
<keyword id="KW-0238">DNA-binding</keyword>
<keyword id="KW-0991">Intellectual disability</keyword>
<keyword id="KW-0539">Nucleus</keyword>
<keyword id="KW-1267">Proteomics identification</keyword>
<keyword id="KW-1185">Reference proteome</keyword>
<keyword id="KW-0804">Transcription</keyword>
<keyword id="KW-0805">Transcription regulation</keyword>
<name>FOXG1_HUMAN</name>
<proteinExistence type="evidence at protein level"/>
<feature type="chain" id="PRO_0000091835" description="Forkhead box protein G1">
    <location>
        <begin position="1"/>
        <end position="489"/>
    </location>
</feature>
<feature type="DNA-binding region" description="Fork-head" evidence="2">
    <location>
        <begin position="181"/>
        <end position="275"/>
    </location>
</feature>
<feature type="region of interest" description="Disordered" evidence="3">
    <location>
        <begin position="31"/>
        <end position="181"/>
    </location>
</feature>
<feature type="region of interest" description="Required for interaction with TLE6" evidence="1">
    <location>
        <begin position="249"/>
        <end position="344"/>
    </location>
</feature>
<feature type="region of interest" description="Interaction with KDM5B" evidence="4">
    <location>
        <begin position="383"/>
        <end position="406"/>
    </location>
</feature>
<feature type="region of interest" description="Disordered" evidence="3">
    <location>
        <begin position="427"/>
        <end position="455"/>
    </location>
</feature>
<feature type="compositionally biased region" description="Basic residues" evidence="3">
    <location>
        <begin position="35"/>
        <end position="58"/>
    </location>
</feature>
<feature type="compositionally biased region" description="Pro residues" evidence="3">
    <location>
        <begin position="59"/>
        <end position="85"/>
    </location>
</feature>
<feature type="compositionally biased region" description="Pro residues" evidence="3">
    <location>
        <begin position="104"/>
        <end position="113"/>
    </location>
</feature>
<feature type="compositionally biased region" description="Gly residues" evidence="3">
    <location>
        <begin position="123"/>
        <end position="135"/>
    </location>
</feature>
<feature type="compositionally biased region" description="Basic and acidic residues" evidence="3">
    <location>
        <begin position="142"/>
        <end position="181"/>
    </location>
</feature>
<feature type="compositionally biased region" description="Low complexity" evidence="3">
    <location>
        <begin position="427"/>
        <end position="450"/>
    </location>
</feature>
<feature type="sequence variant" id="VAR_064395" description="In dbSNP:rs398124203." evidence="6">
    <original>P</original>
    <variation>L</variation>
    <location>
        <position position="109"/>
    </location>
</feature>
<feature type="sequence variant" id="VAR_078715" description="Found in a patient with developmental delay with seizures and mild developmental delay; uncertain significance." evidence="7">
    <original>M</original>
    <variation>R</variation>
    <location>
        <position position="191"/>
    </location>
</feature>
<feature type="sequence variant" id="VAR_063885" description="In RTTCV; dbSNP:rs267606828." evidence="5">
    <original>F</original>
    <variation>L</variation>
    <location>
        <position position="215"/>
    </location>
</feature>
<feature type="sequence variant" id="VAR_078716" description="In RTTCV." evidence="7">
    <location>
        <begin position="217"/>
        <end position="489"/>
    </location>
</feature>
<feature type="sequence variant" id="VAR_078717" description="Found in a patient with developmental delay; likely pathogenic." evidence="7">
    <original>N</original>
    <variation>S</variation>
    <location>
        <position position="232"/>
    </location>
</feature>
<feature type="sequence variant" id="VAR_064396" description="In RTTCV; the mutant protein extensively, although not fully, localizes in nuclear speckles, while the wild-type is more widely dispersed throughout the nucleus; dbSNP:rs786205009." evidence="6">
    <original>R</original>
    <variation>C</variation>
    <location>
        <position position="244"/>
    </location>
</feature>
<feature type="sequence variant" id="VAR_078718" description="In RTTCV." evidence="7">
    <location>
        <begin position="396"/>
        <end position="489"/>
    </location>
</feature>
<feature type="mutagenesis site" description="Abolishes interaction with KDM5B." evidence="4">
    <original>VP</original>
    <variation>AA</variation>
    <location>
        <begin position="388"/>
        <end position="389"/>
    </location>
</feature>
<feature type="mutagenesis site" description="Abolishes interaction with KDM5B." evidence="4">
    <original>VP</original>
    <variation>AA</variation>
    <location>
        <begin position="394"/>
        <end position="395"/>
    </location>
</feature>
<feature type="mutagenesis site" description="Abolishes interaction with KDM5B." evidence="4">
    <original>P</original>
    <variation>A</variation>
    <location>
        <position position="404"/>
    </location>
</feature>
<feature type="sequence conflict" description="In Ref. 1; CAA52239/CAA52240 and 2; CAA55038." evidence="9" ref="1 2">
    <original>AV</original>
    <variation>GL</variation>
    <location>
        <begin position="27"/>
        <end position="28"/>
    </location>
</feature>
<feature type="sequence conflict" description="In Ref. 1; CAA52239." evidence="9" ref="1">
    <original>PQQQQPP</original>
    <variation>RAAQQQQ</variation>
    <location>
        <begin position="69"/>
        <end position="75"/>
    </location>
</feature>
<feature type="sequence conflict" description="In Ref. 1; CAA52240 and 2; CAA55038." evidence="9" ref="1 2">
    <original>PPAPQPPQTRGAPAADDDKGPQQLLLPPPPPPPPAAALDGAKADGLGGKGEPGGGPGELA</original>
    <variation>RRGARRRRRRGPSSCCSAAHAHGAPEGQRQLAQGDRRGRGIC</variation>
    <location>
        <begin position="79"/>
        <end position="138"/>
    </location>
</feature>
<feature type="sequence conflict" description="In Ref. 1; CAA52239." evidence="9" ref="1">
    <original>APQPPQTRGAPAADDD</original>
    <variation>LAPQAGGAAQSNDE</variation>
    <location>
        <begin position="81"/>
        <end position="96"/>
    </location>
</feature>
<feature type="sequence conflict" description="In Ref. 1; CAA52239." evidence="9" ref="1">
    <original>Q</original>
    <variation>L</variation>
    <location>
        <position position="101"/>
    </location>
</feature>
<feature type="sequence conflict" description="In Ref. 1; CAA52239." evidence="9" ref="1">
    <original>PPPPPPAAALD</original>
    <variation>TDHHRPPS</variation>
    <location>
        <begin position="107"/>
        <end position="117"/>
    </location>
</feature>
<feature type="sequence conflict" description="In Ref. 1; CAA52239." evidence="9" ref="1">
    <original>DGLGGKGEPGGG</original>
    <variation>GGCCR</variation>
    <location>
        <begin position="122"/>
        <end position="133"/>
    </location>
</feature>
<feature type="sequence conflict" description="In Ref. 5; AAH50072." evidence="9" ref="5">
    <original>D</original>
    <variation>V</variation>
    <location>
        <position position="122"/>
    </location>
</feature>
<feature type="sequence conflict" description="In Ref. 1; CAA52239." evidence="9" ref="1">
    <original>A</original>
    <variation>G</variation>
    <location>
        <position position="138"/>
    </location>
</feature>
<feature type="sequence conflict" description="In Ref. 1; CAA52240 and 2; CAA55038." evidence="9" ref="1 2">
    <original>GAG</original>
    <variation>AR</variation>
    <location>
        <begin position="148"/>
        <end position="150"/>
    </location>
</feature>
<feature type="sequence conflict" description="In Ref. 1; CAA52241." evidence="9" ref="1">
    <original>P</original>
    <variation>PP</variation>
    <location>
        <position position="183"/>
    </location>
</feature>
<feature type="sequence conflict" description="In Ref. 1; CAA52240 and 2; CAA55038." evidence="9" ref="1 2">
    <original>I</original>
    <variation>M</variation>
    <location>
        <position position="194"/>
    </location>
</feature>
<feature type="sequence conflict" description="In Ref. 1; CAA52241." evidence="9" ref="1">
    <original>Q</original>
    <variation>H</variation>
    <location>
        <position position="226"/>
    </location>
</feature>
<feature type="sequence conflict" description="In Ref. 1; CAA52241." evidence="9" ref="1">
    <original>H</original>
    <variation>D</variation>
    <location>
        <position position="231"/>
    </location>
</feature>
<feature type="sequence conflict" description="In Ref. 5; AAH50072." evidence="9" ref="5">
    <original>K</original>
    <variation>M</variation>
    <location>
        <position position="237"/>
    </location>
</feature>
<feature type="sequence conflict" description="In Ref. 1; CAA52240 and 2; CAA55038." evidence="9" ref="1 2">
    <location>
        <position position="274"/>
    </location>
</feature>
<feature type="sequence conflict" description="In Ref. 1; CAA52240 and 2; CAA55038." evidence="9" ref="1 2">
    <location>
        <position position="276"/>
    </location>
</feature>
<feature type="sequence conflict" description="In Ref. 1; CAA52239/CAA52240 and 2; CAA55038." evidence="9" ref="1 2">
    <original>R</original>
    <variation>P</variation>
    <location>
        <position position="281"/>
    </location>
</feature>
<feature type="sequence conflict" description="In Ref. 1; CAA52240 and 2; CAA55038." evidence="9" ref="1 2">
    <original>L</original>
    <variation>P</variation>
    <location>
        <position position="284"/>
    </location>
</feature>
<feature type="sequence conflict" description="In Ref. 1; CAA52241." evidence="9" ref="1">
    <original>FKRGAR</original>
    <variation>AFRWCA</variation>
    <location>
        <begin position="286"/>
        <end position="291"/>
    </location>
</feature>
<feature type="sequence conflict" description="In Ref. 1; CAA52239/CAA52240 and 2; CAA55038." evidence="9" ref="1 2">
    <original>R</original>
    <variation>A</variation>
    <location>
        <position position="291"/>
    </location>
</feature>
<feature type="sequence conflict" description="In Ref. 1; CAA52240 and 2; CAA55038." evidence="9" ref="1 2">
    <original>RAGSLYWPMSPFLSLHHPR</original>
    <variation>APAPSTGPCRPSCPCTTP</variation>
    <location>
        <begin position="302"/>
        <end position="320"/>
    </location>
</feature>
<feature type="sequence conflict" description="In Ref. 1; CAA52240 and 2; CAA55038." evidence="9" ref="1 2">
    <original>F</original>
    <variation>S</variation>
    <location>
        <position position="356"/>
    </location>
</feature>
<feature type="sequence conflict" description="In Ref. 1; CAA52240 and 2; CAA55038." evidence="9" ref="1 2">
    <original>E</original>
    <variation>G</variation>
    <location>
        <position position="371"/>
    </location>
</feature>
<feature type="sequence conflict" description="In Ref. 1; CAA52240 and 2; CAA55038." evidence="9" ref="1 2">
    <original>A</original>
    <variation>T</variation>
    <location>
        <position position="385"/>
    </location>
</feature>
<feature type="sequence conflict" description="In Ref. 1; CAA52240 and 2; CAA55038." evidence="9" ref="1 2">
    <original>S</original>
    <variation>L</variation>
    <location>
        <position position="393"/>
    </location>
</feature>
<feature type="sequence conflict" description="In Ref. 5; AAH50072." evidence="9" ref="5">
    <original>A</original>
    <variation>T</variation>
    <location>
        <position position="439"/>
    </location>
</feature>
<feature type="sequence conflict" description="In Ref. 1; CAA52240 and 2; CAA55038." evidence="9" ref="1 2">
    <original>QAPST</original>
    <variation>AGPPRP</variation>
    <location>
        <begin position="446"/>
        <end position="450"/>
    </location>
</feature>
<feature type="sequence conflict" description="In Ref. 1; CAA52239." evidence="9" ref="1">
    <original>Q</original>
    <variation>P</variation>
    <location>
        <position position="446"/>
    </location>
</feature>
<feature type="sequence conflict" description="In Ref. 1; CAA52239." evidence="9" ref="1">
    <original>ST</original>
    <variation>RP</variation>
    <location>
        <begin position="449"/>
        <end position="450"/>
    </location>
</feature>
<feature type="helix" evidence="10">
    <location>
        <begin position="186"/>
        <end position="196"/>
    </location>
</feature>
<feature type="helix" evidence="10">
    <location>
        <begin position="204"/>
        <end position="214"/>
    </location>
</feature>
<feature type="helix" evidence="10">
    <location>
        <begin position="216"/>
        <end position="219"/>
    </location>
</feature>
<feature type="helix" evidence="10">
    <location>
        <begin position="222"/>
        <end position="235"/>
    </location>
</feature>
<feature type="strand" evidence="10">
    <location>
        <begin position="239"/>
        <end position="242"/>
    </location>
</feature>
<feature type="strand" evidence="10">
    <location>
        <begin position="254"/>
        <end position="257"/>
    </location>
</feature>
<feature type="helix" evidence="10">
    <location>
        <begin position="259"/>
        <end position="263"/>
    </location>
</feature>
<feature type="strand" evidence="10">
    <location>
        <begin position="264"/>
        <end position="266"/>
    </location>
</feature>
<feature type="turn" evidence="10">
    <location>
        <begin position="268"/>
        <end position="270"/>
    </location>
</feature>
<feature type="strand" evidence="10">
    <location>
        <begin position="272"/>
        <end position="275"/>
    </location>
</feature>
<sequence length="489" mass="52352">MLDMGDRKEVKMIPKSSFSINSLVPEAVQNDNHHASHGHHNSHHPQHHHHHHHHHHHPPPPAPQPPPPPQQQQPPPPPPPAPQPPQTRGAPAADDDKGPQQLLLPPPPPPPPAAALDGAKADGLGGKGEPGGGPGELAPVGPDEKEKGAGAGGEEKKGAGEGGKDGEGGKEGEKKNGKYEKPPFSYNALIMMAIRQSPEKRLTLNGIYEFIMKNFPYYRENKQGWQNSIRHNLSLNKCFVKVPRHYDDPGKGNYWMLDPSSDDVFIGGTTGKLRRRSTTSRAKLAFKRGARLTSTGLTFMDRAGSLYWPMSPFLSLHHPRASSTLSYNGTTSAYPSHPMPYSSVLTQNSLGNNHSFSTANGLSVDRLVNGEIPYATHHLTAAALAASVPCGLSVPCSGTYSLNPCSVNLLAGQTSYFFPHVPHPSMTSQSSTSMSARAASSSTSPQAPSTLPCESLRPSLPSFTTGLSGGLSDYFTHQNQGSSSNPLIH</sequence>
<organism>
    <name type="scientific">Homo sapiens</name>
    <name type="common">Human</name>
    <dbReference type="NCBI Taxonomy" id="9606"/>
    <lineage>
        <taxon>Eukaryota</taxon>
        <taxon>Metazoa</taxon>
        <taxon>Chordata</taxon>
        <taxon>Craniata</taxon>
        <taxon>Vertebrata</taxon>
        <taxon>Euteleostomi</taxon>
        <taxon>Mammalia</taxon>
        <taxon>Eutheria</taxon>
        <taxon>Euarchontoglires</taxon>
        <taxon>Primates</taxon>
        <taxon>Haplorrhini</taxon>
        <taxon>Catarrhini</taxon>
        <taxon>Hominidae</taxon>
        <taxon>Homo</taxon>
    </lineage>
</organism>
<reference key="1">
    <citation type="journal article" date="1994" name="Genomics">
        <title>Human brain factor 1, a new member of the fork head gene family.</title>
        <authorList>
            <person name="Murphy D.B."/>
            <person name="Wiese S."/>
            <person name="Burfeind P."/>
            <person name="Schmundt D."/>
            <person name="Mattei M.-G."/>
            <person name="Schulz-Schaeffer W."/>
            <person name="Thies U."/>
        </authorList>
    </citation>
    <scope>NUCLEOTIDE SEQUENCE [MRNA]</scope>
    <scope>TISSUE SPECIFICITY</scope>
    <source>
        <tissue>Fetal brain</tissue>
    </source>
</reference>
<reference key="2">
    <citation type="journal article" date="1995" name="Biochim. Biophys. Acta">
        <title>The genes for human brain factor 1 and 2, members of the fork head gene family, are clustered on chromosome 14q.</title>
        <authorList>
            <person name="Wiese S."/>
            <person name="Murphy D.B."/>
            <person name="Schlung A."/>
            <person name="Burfeind P."/>
            <person name="Schmundt D."/>
            <person name="Schnulle V."/>
            <person name="Mattei M.-G."/>
            <person name="Thies U."/>
        </authorList>
    </citation>
    <scope>NUCLEOTIDE SEQUENCE [GENOMIC DNA]</scope>
</reference>
<reference key="3">
    <citation type="journal article" date="2003" name="Nature">
        <title>The DNA sequence and analysis of human chromosome 14.</title>
        <authorList>
            <person name="Heilig R."/>
            <person name="Eckenberg R."/>
            <person name="Petit J.-L."/>
            <person name="Fonknechten N."/>
            <person name="Da Silva C."/>
            <person name="Cattolico L."/>
            <person name="Levy M."/>
            <person name="Barbe V."/>
            <person name="De Berardinis V."/>
            <person name="Ureta-Vidal A."/>
            <person name="Pelletier E."/>
            <person name="Vico V."/>
            <person name="Anthouard V."/>
            <person name="Rowen L."/>
            <person name="Madan A."/>
            <person name="Qin S."/>
            <person name="Sun H."/>
            <person name="Du H."/>
            <person name="Pepin K."/>
            <person name="Artiguenave F."/>
            <person name="Robert C."/>
            <person name="Cruaud C."/>
            <person name="Bruels T."/>
            <person name="Jaillon O."/>
            <person name="Friedlander L."/>
            <person name="Samson G."/>
            <person name="Brottier P."/>
            <person name="Cure S."/>
            <person name="Segurens B."/>
            <person name="Aniere F."/>
            <person name="Samain S."/>
            <person name="Crespeau H."/>
            <person name="Abbasi N."/>
            <person name="Aiach N."/>
            <person name="Boscus D."/>
            <person name="Dickhoff R."/>
            <person name="Dors M."/>
            <person name="Dubois I."/>
            <person name="Friedman C."/>
            <person name="Gouyvenoux M."/>
            <person name="James R."/>
            <person name="Madan A."/>
            <person name="Mairey-Estrada B."/>
            <person name="Mangenot S."/>
            <person name="Martins N."/>
            <person name="Menard M."/>
            <person name="Oztas S."/>
            <person name="Ratcliffe A."/>
            <person name="Shaffer T."/>
            <person name="Trask B."/>
            <person name="Vacherie B."/>
            <person name="Bellemere C."/>
            <person name="Belser C."/>
            <person name="Besnard-Gonnet M."/>
            <person name="Bartol-Mavel D."/>
            <person name="Boutard M."/>
            <person name="Briez-Silla S."/>
            <person name="Combette S."/>
            <person name="Dufosse-Laurent V."/>
            <person name="Ferron C."/>
            <person name="Lechaplais C."/>
            <person name="Louesse C."/>
            <person name="Muselet D."/>
            <person name="Magdelenat G."/>
            <person name="Pateau E."/>
            <person name="Petit E."/>
            <person name="Sirvain-Trukniewicz P."/>
            <person name="Trybou A."/>
            <person name="Vega-Czarny N."/>
            <person name="Bataille E."/>
            <person name="Bluet E."/>
            <person name="Bordelais I."/>
            <person name="Dubois M."/>
            <person name="Dumont C."/>
            <person name="Guerin T."/>
            <person name="Haffray S."/>
            <person name="Hammadi R."/>
            <person name="Muanga J."/>
            <person name="Pellouin V."/>
            <person name="Robert D."/>
            <person name="Wunderle E."/>
            <person name="Gauguet G."/>
            <person name="Roy A."/>
            <person name="Sainte-Marthe L."/>
            <person name="Verdier J."/>
            <person name="Verdier-Discala C."/>
            <person name="Hillier L.W."/>
            <person name="Fulton L."/>
            <person name="McPherson J."/>
            <person name="Matsuda F."/>
            <person name="Wilson R."/>
            <person name="Scarpelli C."/>
            <person name="Gyapay G."/>
            <person name="Wincker P."/>
            <person name="Saurin W."/>
            <person name="Quetier F."/>
            <person name="Waterston R."/>
            <person name="Hood L."/>
            <person name="Weissenbach J."/>
        </authorList>
    </citation>
    <scope>NUCLEOTIDE SEQUENCE [LARGE SCALE GENOMIC DNA]</scope>
</reference>
<reference key="4">
    <citation type="submission" date="2005-09" db="EMBL/GenBank/DDBJ databases">
        <authorList>
            <person name="Mural R.J."/>
            <person name="Istrail S."/>
            <person name="Sutton G.G."/>
            <person name="Florea L."/>
            <person name="Halpern A.L."/>
            <person name="Mobarry C.M."/>
            <person name="Lippert R."/>
            <person name="Walenz B."/>
            <person name="Shatkay H."/>
            <person name="Dew I."/>
            <person name="Miller J.R."/>
            <person name="Flanigan M.J."/>
            <person name="Edwards N.J."/>
            <person name="Bolanos R."/>
            <person name="Fasulo D."/>
            <person name="Halldorsson B.V."/>
            <person name="Hannenhalli S."/>
            <person name="Turner R."/>
            <person name="Yooseph S."/>
            <person name="Lu F."/>
            <person name="Nusskern D.R."/>
            <person name="Shue B.C."/>
            <person name="Zheng X.H."/>
            <person name="Zhong F."/>
            <person name="Delcher A.L."/>
            <person name="Huson D.H."/>
            <person name="Kravitz S.A."/>
            <person name="Mouchard L."/>
            <person name="Reinert K."/>
            <person name="Remington K.A."/>
            <person name="Clark A.G."/>
            <person name="Waterman M.S."/>
            <person name="Eichler E.E."/>
            <person name="Adams M.D."/>
            <person name="Hunkapiller M.W."/>
            <person name="Myers E.W."/>
            <person name="Venter J.C."/>
        </authorList>
    </citation>
    <scope>NUCLEOTIDE SEQUENCE [LARGE SCALE GENOMIC DNA]</scope>
</reference>
<reference key="5">
    <citation type="journal article" date="2004" name="Genome Res.">
        <title>The status, quality, and expansion of the NIH full-length cDNA project: the Mammalian Gene Collection (MGC).</title>
        <authorList>
            <consortium name="The MGC Project Team"/>
        </authorList>
    </citation>
    <scope>NUCLEOTIDE SEQUENCE [LARGE SCALE MRNA]</scope>
    <source>
        <tissue>Brain</tissue>
    </source>
</reference>
<reference key="6">
    <citation type="journal article" date="2003" name="J. Biol. Chem.">
        <title>Human PLU-1 has transcriptional repression properties and interacts with the developmental transcription factors BF-1 and PAX9.</title>
        <authorList>
            <person name="Tan K."/>
            <person name="Shaw A.L."/>
            <person name="Madsen B."/>
            <person name="Jensen K."/>
            <person name="Taylor-Papadimitriou J."/>
            <person name="Freemont P.S."/>
        </authorList>
    </citation>
    <scope>INTERACTION WITH KDM5B</scope>
    <scope>MUTAGENESIS OF 388-VAL-PRO-389; 394-VAL-PRO-395 AND PRO-404</scope>
    <scope>FUNCTION</scope>
</reference>
<reference key="7">
    <citation type="journal article" date="2007" name="Dev. Genes Evol.">
        <title>Comparative evolutionary analysis of the FoxG1 transcription factor from diverse vertebrates identifies conserved recognition sites for microRNA regulation.</title>
        <authorList>
            <person name="Bredenkamp N."/>
            <person name="Seoighe C."/>
            <person name="Illing N."/>
        </authorList>
    </citation>
    <scope>IDENTIFICATION OF FOXG1 AS A SINGLE-COPY GENE</scope>
</reference>
<reference key="8">
    <citation type="journal article" date="2011" name="Hum. Mutat.">
        <title>A missense mutation within the fork-head domain of the forkhead box G1 Gene (FOXG1) affects its nuclear localization.</title>
        <authorList>
            <person name="Guen T.L."/>
            <person name="Fichou Y."/>
            <person name="Nectoux J."/>
            <person name="Bahi-Buisson N."/>
            <person name="Rivier F."/>
            <person name="Boddaert N."/>
            <person name="Diebold B."/>
            <person name="Heron D."/>
            <person name="Chelly J."/>
            <person name="Bienvenu T."/>
        </authorList>
    </citation>
    <scope>SUBCELLULAR LOCATION</scope>
    <scope>VARIANT RTTCV CYS-244</scope>
    <scope>VARIANT LEU-109</scope>
    <scope>CHARACTERIZATION OF VARIANT RTTCV CYS-244</scope>
</reference>
<reference key="9">
    <citation type="journal article" date="2010" name="J. Med. Genet.">
        <title>Novel FOXG1 mutations associated with the congenital variant of Rett syndrome.</title>
        <authorList>
            <person name="Mencarelli M.A."/>
            <person name="Spanhol-Rosseto A."/>
            <person name="Artuso R."/>
            <person name="Rondinella D."/>
            <person name="De Filippis R."/>
            <person name="Bahi-Buisson N."/>
            <person name="Nectoux J."/>
            <person name="Rubinsztajn R."/>
            <person name="Bienvenu T."/>
            <person name="Moncla A."/>
            <person name="Chabrol B."/>
            <person name="Villard L."/>
            <person name="Krumina Z."/>
            <person name="Armstrong J."/>
            <person name="Roche A."/>
            <person name="Pineda M."/>
            <person name="Gak E."/>
            <person name="Mari F."/>
            <person name="Ariani F."/>
            <person name="Renieri A."/>
        </authorList>
    </citation>
    <scope>VARIANT RTTCV LEU-215</scope>
</reference>
<reference key="10">
    <citation type="journal article" date="2016" name="J. Med. Genet.">
        <title>Improving diagnosis and broadening the phenotypes in early-onset seizure and severe developmental delay disorders through gene panel analysis.</title>
        <authorList>
            <person name="Trump N."/>
            <person name="McTague A."/>
            <person name="Brittain H."/>
            <person name="Papandreou A."/>
            <person name="Meyer E."/>
            <person name="Ngoh A."/>
            <person name="Palmer R."/>
            <person name="Morrogh D."/>
            <person name="Boustred C."/>
            <person name="Hurst J.A."/>
            <person name="Jenkins L."/>
            <person name="Kurian M.A."/>
            <person name="Scott R.H."/>
        </authorList>
    </citation>
    <scope>VARIANTS ARG-191 AND SER-232</scope>
    <scope>VARIANTS RTTCV 217-TYR--HIS-489 DEL AND 396-CYS--HIS-489 DEL</scope>
</reference>
<gene>
    <name type="primary">FOXG1</name>
    <name type="synonym">FKH2</name>
    <name type="synonym">FKHL1</name>
    <name type="synonym">FKHL2</name>
    <name type="synonym">FKHL3</name>
    <name type="synonym">FKHL4</name>
    <name type="synonym">FOXG1A</name>
    <name type="synonym">FOXG1B</name>
    <name type="synonym">FOXG1C</name>
</gene>
<accession>P55316</accession>
<accession>A6NFY2</accession>
<accession>P55315</accession>
<accession>Q14488</accession>
<accession>Q86XT7</accession>